<organism>
    <name type="scientific">Xanthomonas campestris pv. campestris (strain B100)</name>
    <dbReference type="NCBI Taxonomy" id="509169"/>
    <lineage>
        <taxon>Bacteria</taxon>
        <taxon>Pseudomonadati</taxon>
        <taxon>Pseudomonadota</taxon>
        <taxon>Gammaproteobacteria</taxon>
        <taxon>Lysobacterales</taxon>
        <taxon>Lysobacteraceae</taxon>
        <taxon>Xanthomonas</taxon>
    </lineage>
</organism>
<sequence length="130" mass="14504">MAITQNYGTGRRKSSTARVFLRKGTGNITVNNRPLDEFFGRETARMIVRQPLELTKNTESFDILVTASGGGTTGQAGAIRLGIARALVEYDETLKSELRKAGFMTRDAREVERKKVGLHKARRATQFSKR</sequence>
<feature type="chain" id="PRO_1000128195" description="Small ribosomal subunit protein uS9">
    <location>
        <begin position="1"/>
        <end position="130"/>
    </location>
</feature>
<name>RS9_XANCB</name>
<accession>B0RN06</accession>
<protein>
    <recommendedName>
        <fullName evidence="1">Small ribosomal subunit protein uS9</fullName>
    </recommendedName>
    <alternativeName>
        <fullName evidence="2">30S ribosomal protein S9</fullName>
    </alternativeName>
</protein>
<dbReference type="EMBL" id="AM920689">
    <property type="protein sequence ID" value="CAP49841.1"/>
    <property type="molecule type" value="Genomic_DNA"/>
</dbReference>
<dbReference type="SMR" id="B0RN06"/>
<dbReference type="KEGG" id="xca:xcc-b100_0507"/>
<dbReference type="HOGENOM" id="CLU_046483_2_1_6"/>
<dbReference type="Proteomes" id="UP000001188">
    <property type="component" value="Chromosome"/>
</dbReference>
<dbReference type="GO" id="GO:0022627">
    <property type="term" value="C:cytosolic small ribosomal subunit"/>
    <property type="evidence" value="ECO:0007669"/>
    <property type="project" value="TreeGrafter"/>
</dbReference>
<dbReference type="GO" id="GO:0003723">
    <property type="term" value="F:RNA binding"/>
    <property type="evidence" value="ECO:0007669"/>
    <property type="project" value="TreeGrafter"/>
</dbReference>
<dbReference type="GO" id="GO:0003735">
    <property type="term" value="F:structural constituent of ribosome"/>
    <property type="evidence" value="ECO:0007669"/>
    <property type="project" value="InterPro"/>
</dbReference>
<dbReference type="GO" id="GO:0006412">
    <property type="term" value="P:translation"/>
    <property type="evidence" value="ECO:0007669"/>
    <property type="project" value="UniProtKB-UniRule"/>
</dbReference>
<dbReference type="FunFam" id="3.30.230.10:FF:000001">
    <property type="entry name" value="30S ribosomal protein S9"/>
    <property type="match status" value="1"/>
</dbReference>
<dbReference type="Gene3D" id="3.30.230.10">
    <property type="match status" value="1"/>
</dbReference>
<dbReference type="HAMAP" id="MF_00532_B">
    <property type="entry name" value="Ribosomal_uS9_B"/>
    <property type="match status" value="1"/>
</dbReference>
<dbReference type="InterPro" id="IPR020568">
    <property type="entry name" value="Ribosomal_Su5_D2-typ_SF"/>
</dbReference>
<dbReference type="InterPro" id="IPR000754">
    <property type="entry name" value="Ribosomal_uS9"/>
</dbReference>
<dbReference type="InterPro" id="IPR023035">
    <property type="entry name" value="Ribosomal_uS9_bac/plastid"/>
</dbReference>
<dbReference type="InterPro" id="IPR020574">
    <property type="entry name" value="Ribosomal_uS9_CS"/>
</dbReference>
<dbReference type="InterPro" id="IPR014721">
    <property type="entry name" value="Ribsml_uS5_D2-typ_fold_subgr"/>
</dbReference>
<dbReference type="NCBIfam" id="NF001099">
    <property type="entry name" value="PRK00132.1"/>
    <property type="match status" value="1"/>
</dbReference>
<dbReference type="PANTHER" id="PTHR21569">
    <property type="entry name" value="RIBOSOMAL PROTEIN S9"/>
    <property type="match status" value="1"/>
</dbReference>
<dbReference type="PANTHER" id="PTHR21569:SF1">
    <property type="entry name" value="SMALL RIBOSOMAL SUBUNIT PROTEIN US9M"/>
    <property type="match status" value="1"/>
</dbReference>
<dbReference type="Pfam" id="PF00380">
    <property type="entry name" value="Ribosomal_S9"/>
    <property type="match status" value="1"/>
</dbReference>
<dbReference type="SUPFAM" id="SSF54211">
    <property type="entry name" value="Ribosomal protein S5 domain 2-like"/>
    <property type="match status" value="1"/>
</dbReference>
<dbReference type="PROSITE" id="PS00360">
    <property type="entry name" value="RIBOSOMAL_S9"/>
    <property type="match status" value="1"/>
</dbReference>
<keyword id="KW-0687">Ribonucleoprotein</keyword>
<keyword id="KW-0689">Ribosomal protein</keyword>
<comment type="similarity">
    <text evidence="1">Belongs to the universal ribosomal protein uS9 family.</text>
</comment>
<evidence type="ECO:0000255" key="1">
    <source>
        <dbReference type="HAMAP-Rule" id="MF_00532"/>
    </source>
</evidence>
<evidence type="ECO:0000305" key="2"/>
<gene>
    <name evidence="1" type="primary">rpsI</name>
    <name type="ordered locus">xcc-b100_0507</name>
</gene>
<proteinExistence type="inferred from homology"/>
<reference key="1">
    <citation type="journal article" date="2008" name="J. Biotechnol.">
        <title>The genome of Xanthomonas campestris pv. campestris B100 and its use for the reconstruction of metabolic pathways involved in xanthan biosynthesis.</title>
        <authorList>
            <person name="Vorhoelter F.-J."/>
            <person name="Schneiker S."/>
            <person name="Goesmann A."/>
            <person name="Krause L."/>
            <person name="Bekel T."/>
            <person name="Kaiser O."/>
            <person name="Linke B."/>
            <person name="Patschkowski T."/>
            <person name="Rueckert C."/>
            <person name="Schmid J."/>
            <person name="Sidhu V.K."/>
            <person name="Sieber V."/>
            <person name="Tauch A."/>
            <person name="Watt S.A."/>
            <person name="Weisshaar B."/>
            <person name="Becker A."/>
            <person name="Niehaus K."/>
            <person name="Puehler A."/>
        </authorList>
    </citation>
    <scope>NUCLEOTIDE SEQUENCE [LARGE SCALE GENOMIC DNA]</scope>
    <source>
        <strain>B100</strain>
    </source>
</reference>